<keyword id="KW-0066">ATP synthesis</keyword>
<keyword id="KW-1003">Cell membrane</keyword>
<keyword id="KW-0139">CF(1)</keyword>
<keyword id="KW-0375">Hydrogen ion transport</keyword>
<keyword id="KW-0406">Ion transport</keyword>
<keyword id="KW-0472">Membrane</keyword>
<keyword id="KW-0813">Transport</keyword>
<accession>O50156</accession>
<gene>
    <name evidence="1" type="primary">atpH</name>
</gene>
<protein>
    <recommendedName>
        <fullName evidence="1">ATP synthase subunit delta</fullName>
    </recommendedName>
    <alternativeName>
        <fullName evidence="1">ATP synthase F(1) sector subunit delta</fullName>
    </alternativeName>
    <alternativeName>
        <fullName evidence="1">F-type ATPase subunit delta</fullName>
        <shortName evidence="1">F-ATPase subunit delta</shortName>
    </alternativeName>
</protein>
<comment type="function">
    <text evidence="1">F(1)F(0) ATP synthase produces ATP from ADP in the presence of a proton or sodium gradient. F-type ATPases consist of two structural domains, F(1) containing the extramembraneous catalytic core and F(0) containing the membrane proton channel, linked together by a central stalk and a peripheral stalk. During catalysis, ATP synthesis in the catalytic domain of F(1) is coupled via a rotary mechanism of the central stalk subunits to proton translocation.</text>
</comment>
<comment type="function">
    <text evidence="1">This protein is part of the stalk that links CF(0) to CF(1). It either transmits conformational changes from CF(0) to CF(1) or is implicated in proton conduction.</text>
</comment>
<comment type="subunit">
    <text evidence="1">F-type ATPases have 2 components, F(1) - the catalytic core - and F(0) - the membrane proton channel. F(1) has five subunits: alpha(3), beta(3), gamma(1), delta(1), epsilon(1). F(0) has three main subunits: a(1), b(2) and c(10-14). The alpha and beta chains form an alternating ring which encloses part of the gamma chain. F(1) is attached to F(0) by a central stalk formed by the gamma and epsilon chains, while a peripheral stalk is formed by the delta and b chains.</text>
</comment>
<comment type="subcellular location">
    <subcellularLocation>
        <location evidence="1">Cell membrane</location>
        <topology evidence="1">Peripheral membrane protein</topology>
    </subcellularLocation>
</comment>
<comment type="similarity">
    <text evidence="1">Belongs to the ATPase delta chain family.</text>
</comment>
<organism>
    <name type="scientific">Streptococcus equinus</name>
    <name type="common">Streptococcus bovis</name>
    <dbReference type="NCBI Taxonomy" id="1335"/>
    <lineage>
        <taxon>Bacteria</taxon>
        <taxon>Bacillati</taxon>
        <taxon>Bacillota</taxon>
        <taxon>Bacilli</taxon>
        <taxon>Lactobacillales</taxon>
        <taxon>Streptococcaceae</taxon>
        <taxon>Streptococcus</taxon>
    </lineage>
</organism>
<name>ATPD_STREI</name>
<proteinExistence type="inferred from homology"/>
<dbReference type="EMBL" id="AB009314">
    <property type="protein sequence ID" value="BAA23752.1"/>
    <property type="molecule type" value="Genomic_DNA"/>
</dbReference>
<dbReference type="RefSeq" id="WP_039697148.1">
    <property type="nucleotide sequence ID" value="NZ_FOLK01000002.1"/>
</dbReference>
<dbReference type="SMR" id="O50156"/>
<dbReference type="OrthoDB" id="9802471at2"/>
<dbReference type="GO" id="GO:0005886">
    <property type="term" value="C:plasma membrane"/>
    <property type="evidence" value="ECO:0007669"/>
    <property type="project" value="UniProtKB-SubCell"/>
</dbReference>
<dbReference type="GO" id="GO:0045259">
    <property type="term" value="C:proton-transporting ATP synthase complex"/>
    <property type="evidence" value="ECO:0007669"/>
    <property type="project" value="UniProtKB-KW"/>
</dbReference>
<dbReference type="GO" id="GO:0046933">
    <property type="term" value="F:proton-transporting ATP synthase activity, rotational mechanism"/>
    <property type="evidence" value="ECO:0007669"/>
    <property type="project" value="UniProtKB-UniRule"/>
</dbReference>
<dbReference type="Gene3D" id="1.10.520.20">
    <property type="entry name" value="N-terminal domain of the delta subunit of the F1F0-ATP synthase"/>
    <property type="match status" value="1"/>
</dbReference>
<dbReference type="HAMAP" id="MF_01416">
    <property type="entry name" value="ATP_synth_delta_bact"/>
    <property type="match status" value="1"/>
</dbReference>
<dbReference type="InterPro" id="IPR026015">
    <property type="entry name" value="ATP_synth_OSCP/delta_N_sf"/>
</dbReference>
<dbReference type="InterPro" id="IPR000711">
    <property type="entry name" value="ATPase_OSCP/dsu"/>
</dbReference>
<dbReference type="NCBIfam" id="TIGR01145">
    <property type="entry name" value="ATP_synt_delta"/>
    <property type="match status" value="1"/>
</dbReference>
<dbReference type="NCBIfam" id="NF004401">
    <property type="entry name" value="PRK05758.2-1"/>
    <property type="match status" value="1"/>
</dbReference>
<dbReference type="PANTHER" id="PTHR11910">
    <property type="entry name" value="ATP SYNTHASE DELTA CHAIN"/>
    <property type="match status" value="1"/>
</dbReference>
<dbReference type="Pfam" id="PF00213">
    <property type="entry name" value="OSCP"/>
    <property type="match status" value="1"/>
</dbReference>
<dbReference type="PRINTS" id="PR00125">
    <property type="entry name" value="ATPASEDELTA"/>
</dbReference>
<dbReference type="SUPFAM" id="SSF47928">
    <property type="entry name" value="N-terminal domain of the delta subunit of the F1F0-ATP synthase"/>
    <property type="match status" value="1"/>
</dbReference>
<reference key="1">
    <citation type="submission" date="1997-11" db="EMBL/GenBank/DDBJ databases">
        <title>Sequence analysis of the gene coding proton-translocating ATPase of Streptococcus bovis.</title>
        <authorList>
            <person name="Umemori J."/>
            <person name="Miwa T."/>
            <person name="Nagamine T."/>
            <person name="Ogata K."/>
            <person name="Takenaka A."/>
            <person name="Hino T."/>
        </authorList>
    </citation>
    <scope>NUCLEOTIDE SEQUENCE [GENOMIC DNA]</scope>
    <source>
        <strain>ATCC 700410 / JB1</strain>
    </source>
</reference>
<evidence type="ECO:0000255" key="1">
    <source>
        <dbReference type="HAMAP-Rule" id="MF_01416"/>
    </source>
</evidence>
<sequence>MDKKTQALVEQYAKSLVEIAIEKDSLAELQSETEALLSVFEETNLADFLSSLVVSRDEKVKLVRLLQESSSVYMNNFLEVILQNEREAFLKAILEGVQKDFVIATNQHDIVVTTAVALTDEQKERILALVAEKFGVKAGKLVENIDESILGGFVINVNNKVIDTSIRRQLQEFKMNLK</sequence>
<feature type="chain" id="PRO_0000193488" description="ATP synthase subunit delta">
    <location>
        <begin position="1"/>
        <end position="178"/>
    </location>
</feature>